<protein>
    <recommendedName>
        <fullName evidence="1">Probable GTP-binding protein EngB</fullName>
    </recommendedName>
</protein>
<keyword id="KW-0131">Cell cycle</keyword>
<keyword id="KW-0132">Cell division</keyword>
<keyword id="KW-0342">GTP-binding</keyword>
<keyword id="KW-0460">Magnesium</keyword>
<keyword id="KW-0479">Metal-binding</keyword>
<keyword id="KW-0547">Nucleotide-binding</keyword>
<keyword id="KW-1185">Reference proteome</keyword>
<keyword id="KW-0717">Septation</keyword>
<name>ENGB_DESRM</name>
<sequence length="205" mass="22902">MKIVAAEFVTSAVNPGGYPPGNLPEVAFVGRSNVGKSSLINKVVNRKGLAKTSSTPGRTQLINFFNINNDQFLMVDLPGYGYAKVPTDVRIKWGKMIEGYLKERECLKGVVLLIDSRHTPTAQDKQMYEWLQYYHVPTVVVATKVDKLSNNQWAKQQAVIKKSLPLSKEHQLISFSAETGRGKEKLLKVLDEFIHKDGINLTAIE</sequence>
<reference key="1">
    <citation type="submission" date="2007-03" db="EMBL/GenBank/DDBJ databases">
        <title>Complete sequence of Desulfotomaculum reducens MI-1.</title>
        <authorList>
            <consortium name="US DOE Joint Genome Institute"/>
            <person name="Copeland A."/>
            <person name="Lucas S."/>
            <person name="Lapidus A."/>
            <person name="Barry K."/>
            <person name="Detter J.C."/>
            <person name="Glavina del Rio T."/>
            <person name="Hammon N."/>
            <person name="Israni S."/>
            <person name="Dalin E."/>
            <person name="Tice H."/>
            <person name="Pitluck S."/>
            <person name="Sims D."/>
            <person name="Brettin T."/>
            <person name="Bruce D."/>
            <person name="Han C."/>
            <person name="Tapia R."/>
            <person name="Schmutz J."/>
            <person name="Larimer F."/>
            <person name="Land M."/>
            <person name="Hauser L."/>
            <person name="Kyrpides N."/>
            <person name="Kim E."/>
            <person name="Tebo B.M."/>
            <person name="Richardson P."/>
        </authorList>
    </citation>
    <scope>NUCLEOTIDE SEQUENCE [LARGE SCALE GENOMIC DNA]</scope>
    <source>
        <strain>ATCC BAA-1160 / DSM 100696 / MI-1</strain>
    </source>
</reference>
<proteinExistence type="inferred from homology"/>
<accession>A4J7L5</accession>
<evidence type="ECO:0000255" key="1">
    <source>
        <dbReference type="HAMAP-Rule" id="MF_00321"/>
    </source>
</evidence>
<dbReference type="EMBL" id="CP000612">
    <property type="protein sequence ID" value="ABO51068.1"/>
    <property type="molecule type" value="Genomic_DNA"/>
</dbReference>
<dbReference type="RefSeq" id="WP_011878866.1">
    <property type="nucleotide sequence ID" value="NC_009253.1"/>
</dbReference>
<dbReference type="SMR" id="A4J7L5"/>
<dbReference type="STRING" id="349161.Dred_2558"/>
<dbReference type="KEGG" id="drm:Dred_2558"/>
<dbReference type="eggNOG" id="COG0218">
    <property type="taxonomic scope" value="Bacteria"/>
</dbReference>
<dbReference type="HOGENOM" id="CLU_033732_3_0_9"/>
<dbReference type="OrthoDB" id="9804921at2"/>
<dbReference type="Proteomes" id="UP000001556">
    <property type="component" value="Chromosome"/>
</dbReference>
<dbReference type="GO" id="GO:0005829">
    <property type="term" value="C:cytosol"/>
    <property type="evidence" value="ECO:0007669"/>
    <property type="project" value="TreeGrafter"/>
</dbReference>
<dbReference type="GO" id="GO:0005525">
    <property type="term" value="F:GTP binding"/>
    <property type="evidence" value="ECO:0007669"/>
    <property type="project" value="UniProtKB-UniRule"/>
</dbReference>
<dbReference type="GO" id="GO:0046872">
    <property type="term" value="F:metal ion binding"/>
    <property type="evidence" value="ECO:0007669"/>
    <property type="project" value="UniProtKB-KW"/>
</dbReference>
<dbReference type="GO" id="GO:0000917">
    <property type="term" value="P:division septum assembly"/>
    <property type="evidence" value="ECO:0007669"/>
    <property type="project" value="UniProtKB-KW"/>
</dbReference>
<dbReference type="CDD" id="cd01876">
    <property type="entry name" value="YihA_EngB"/>
    <property type="match status" value="1"/>
</dbReference>
<dbReference type="FunFam" id="3.40.50.300:FF:000098">
    <property type="entry name" value="Probable GTP-binding protein EngB"/>
    <property type="match status" value="1"/>
</dbReference>
<dbReference type="Gene3D" id="3.40.50.300">
    <property type="entry name" value="P-loop containing nucleotide triphosphate hydrolases"/>
    <property type="match status" value="1"/>
</dbReference>
<dbReference type="HAMAP" id="MF_00321">
    <property type="entry name" value="GTPase_EngB"/>
    <property type="match status" value="1"/>
</dbReference>
<dbReference type="InterPro" id="IPR030393">
    <property type="entry name" value="G_ENGB_dom"/>
</dbReference>
<dbReference type="InterPro" id="IPR006073">
    <property type="entry name" value="GTP-bd"/>
</dbReference>
<dbReference type="InterPro" id="IPR019987">
    <property type="entry name" value="GTP-bd_ribosome_bio_YsxC"/>
</dbReference>
<dbReference type="InterPro" id="IPR027417">
    <property type="entry name" value="P-loop_NTPase"/>
</dbReference>
<dbReference type="InterPro" id="IPR005225">
    <property type="entry name" value="Small_GTP-bd"/>
</dbReference>
<dbReference type="NCBIfam" id="TIGR03598">
    <property type="entry name" value="GTPase_YsxC"/>
    <property type="match status" value="1"/>
</dbReference>
<dbReference type="NCBIfam" id="TIGR00231">
    <property type="entry name" value="small_GTP"/>
    <property type="match status" value="1"/>
</dbReference>
<dbReference type="PANTHER" id="PTHR11649:SF13">
    <property type="entry name" value="ENGB-TYPE G DOMAIN-CONTAINING PROTEIN"/>
    <property type="match status" value="1"/>
</dbReference>
<dbReference type="PANTHER" id="PTHR11649">
    <property type="entry name" value="MSS1/TRME-RELATED GTP-BINDING PROTEIN"/>
    <property type="match status" value="1"/>
</dbReference>
<dbReference type="Pfam" id="PF01926">
    <property type="entry name" value="MMR_HSR1"/>
    <property type="match status" value="1"/>
</dbReference>
<dbReference type="SUPFAM" id="SSF52540">
    <property type="entry name" value="P-loop containing nucleoside triphosphate hydrolases"/>
    <property type="match status" value="1"/>
</dbReference>
<dbReference type="PROSITE" id="PS51706">
    <property type="entry name" value="G_ENGB"/>
    <property type="match status" value="1"/>
</dbReference>
<feature type="chain" id="PRO_1000072016" description="Probable GTP-binding protein EngB">
    <location>
        <begin position="1"/>
        <end position="205"/>
    </location>
</feature>
<feature type="domain" description="EngB-type G" evidence="1">
    <location>
        <begin position="22"/>
        <end position="196"/>
    </location>
</feature>
<feature type="binding site" evidence="1">
    <location>
        <begin position="30"/>
        <end position="37"/>
    </location>
    <ligand>
        <name>GTP</name>
        <dbReference type="ChEBI" id="CHEBI:37565"/>
    </ligand>
</feature>
<feature type="binding site" evidence="1">
    <location>
        <position position="37"/>
    </location>
    <ligand>
        <name>Mg(2+)</name>
        <dbReference type="ChEBI" id="CHEBI:18420"/>
    </ligand>
</feature>
<feature type="binding site" evidence="1">
    <location>
        <begin position="57"/>
        <end position="61"/>
    </location>
    <ligand>
        <name>GTP</name>
        <dbReference type="ChEBI" id="CHEBI:37565"/>
    </ligand>
</feature>
<feature type="binding site" evidence="1">
    <location>
        <position position="59"/>
    </location>
    <ligand>
        <name>Mg(2+)</name>
        <dbReference type="ChEBI" id="CHEBI:18420"/>
    </ligand>
</feature>
<feature type="binding site" evidence="1">
    <location>
        <begin position="76"/>
        <end position="79"/>
    </location>
    <ligand>
        <name>GTP</name>
        <dbReference type="ChEBI" id="CHEBI:37565"/>
    </ligand>
</feature>
<feature type="binding site" evidence="1">
    <location>
        <begin position="143"/>
        <end position="146"/>
    </location>
    <ligand>
        <name>GTP</name>
        <dbReference type="ChEBI" id="CHEBI:37565"/>
    </ligand>
</feature>
<feature type="binding site" evidence="1">
    <location>
        <begin position="175"/>
        <end position="177"/>
    </location>
    <ligand>
        <name>GTP</name>
        <dbReference type="ChEBI" id="CHEBI:37565"/>
    </ligand>
</feature>
<comment type="function">
    <text evidence="1">Necessary for normal cell division and for the maintenance of normal septation.</text>
</comment>
<comment type="cofactor">
    <cofactor evidence="1">
        <name>Mg(2+)</name>
        <dbReference type="ChEBI" id="CHEBI:18420"/>
    </cofactor>
</comment>
<comment type="similarity">
    <text evidence="1">Belongs to the TRAFAC class TrmE-Era-EngA-EngB-Septin-like GTPase superfamily. EngB GTPase family.</text>
</comment>
<organism>
    <name type="scientific">Desulforamulus reducens (strain ATCC BAA-1160 / DSM 100696 / MI-1)</name>
    <name type="common">Desulfotomaculum reducens</name>
    <dbReference type="NCBI Taxonomy" id="349161"/>
    <lineage>
        <taxon>Bacteria</taxon>
        <taxon>Bacillati</taxon>
        <taxon>Bacillota</taxon>
        <taxon>Clostridia</taxon>
        <taxon>Eubacteriales</taxon>
        <taxon>Peptococcaceae</taxon>
        <taxon>Desulforamulus</taxon>
    </lineage>
</organism>
<gene>
    <name evidence="1" type="primary">engB</name>
    <name type="ordered locus">Dred_2558</name>
</gene>